<accession>P86990</accession>
<organism>
    <name type="scientific">Rhopalurus junceus</name>
    <name type="common">Caribbean blue scorpion</name>
    <dbReference type="NCBI Taxonomy" id="419285"/>
    <lineage>
        <taxon>Eukaryota</taxon>
        <taxon>Metazoa</taxon>
        <taxon>Ecdysozoa</taxon>
        <taxon>Arthropoda</taxon>
        <taxon>Chelicerata</taxon>
        <taxon>Arachnida</taxon>
        <taxon>Scorpiones</taxon>
        <taxon>Buthida</taxon>
        <taxon>Buthoidea</taxon>
        <taxon>Buthidae</taxon>
        <taxon>Rhopalurus</taxon>
    </lineage>
</organism>
<feature type="chain" id="PRO_0000413460" description="Non-toxic venom protein">
    <location>
        <begin position="1"/>
        <end position="34" status="greater than"/>
    </location>
</feature>
<feature type="domain" description="LCN-type CS-alpha/beta" evidence="3">
    <location>
        <begin position="1"/>
        <end position="34" status="greater than"/>
    </location>
</feature>
<feature type="disulfide bond" evidence="1">
    <location>
        <begin position="11"/>
        <end status="unknown"/>
    </location>
</feature>
<feature type="disulfide bond" evidence="1">
    <location>
        <begin position="15"/>
        <end status="unknown"/>
    </location>
</feature>
<feature type="disulfide bond" evidence="1">
    <location>
        <begin position="22"/>
        <end status="unknown"/>
    </location>
</feature>
<feature type="disulfide bond" evidence="1">
    <location>
        <begin position="26"/>
        <end status="unknown"/>
    </location>
</feature>
<feature type="non-terminal residue" evidence="5">
    <location>
        <position position="34"/>
    </location>
</feature>
<proteinExistence type="evidence at protein level"/>
<keyword id="KW-0903">Direct protein sequencing</keyword>
<keyword id="KW-1015">Disulfide bond</keyword>
<keyword id="KW-0964">Secreted</keyword>
<dbReference type="GO" id="GO:0005576">
    <property type="term" value="C:extracellular region"/>
    <property type="evidence" value="ECO:0007669"/>
    <property type="project" value="UniProtKB-SubCell"/>
</dbReference>
<dbReference type="GO" id="GO:0008200">
    <property type="term" value="F:ion channel inhibitor activity"/>
    <property type="evidence" value="ECO:0007669"/>
    <property type="project" value="InterPro"/>
</dbReference>
<dbReference type="Gene3D" id="3.30.30.10">
    <property type="entry name" value="Knottin, scorpion toxin-like"/>
    <property type="match status" value="1"/>
</dbReference>
<dbReference type="InterPro" id="IPR044062">
    <property type="entry name" value="LCN-type_CS_alpha_beta_dom"/>
</dbReference>
<dbReference type="InterPro" id="IPR036574">
    <property type="entry name" value="Scorpion_toxin-like_sf"/>
</dbReference>
<dbReference type="SUPFAM" id="SSF57095">
    <property type="entry name" value="Scorpion toxin-like"/>
    <property type="match status" value="1"/>
</dbReference>
<dbReference type="PROSITE" id="PS51863">
    <property type="entry name" value="LCN_CSAB"/>
    <property type="match status" value="1"/>
</dbReference>
<comment type="function">
    <text evidence="4">Does not cause symptoms of intoxication, paralysis or death in insects (A.domestica).</text>
</comment>
<comment type="subcellular location">
    <subcellularLocation>
        <location evidence="4">Secreted</location>
    </subcellularLocation>
</comment>
<comment type="tissue specificity">
    <text evidence="7">Expressed by the venom gland.</text>
</comment>
<comment type="domain">
    <text evidence="6">Has the structural arrangement of an alpha-helix connected to antiparallel beta-sheets by disulfide bonds (CS-alpha/beta).</text>
</comment>
<comment type="mass spectrometry"/>
<comment type="similarity">
    <text evidence="2">Belongs to the long (4 C-C) scorpion toxin superfamily. Sodium channel inhibitor family.</text>
</comment>
<sequence>KEGYPTNSEGCKITXLFNDPYCKGXCINLSTQAD</sequence>
<protein>
    <recommendedName>
        <fullName evidence="7">Non-toxic venom protein</fullName>
    </recommendedName>
</protein>
<name>NTVP_RHOJU</name>
<reference evidence="6" key="1">
    <citation type="journal article" date="2011" name="Toxicon">
        <title>Biochemical and molecular characterization of the venom from the Cuban scorpion Rhopalurus junceus.</title>
        <authorList>
            <person name="Garcia-Gomez B.I."/>
            <person name="Coronas F.I."/>
            <person name="Restano-Cassulini R."/>
            <person name="Rodriguez R.R."/>
            <person name="Possani L.D."/>
        </authorList>
    </citation>
    <scope>PROTEIN SEQUENCE</scope>
    <scope>FUNCTION</scope>
    <scope>SUBCELLULAR LOCATION</scope>
    <scope>MASS SPECTROMETRY</scope>
    <source>
        <tissue evidence="4">Venom</tissue>
    </source>
</reference>
<evidence type="ECO:0000250" key="1">
    <source>
        <dbReference type="UniProtKB" id="P15226"/>
    </source>
</evidence>
<evidence type="ECO:0000255" key="2"/>
<evidence type="ECO:0000255" key="3">
    <source>
        <dbReference type="PROSITE-ProRule" id="PRU01210"/>
    </source>
</evidence>
<evidence type="ECO:0000269" key="4">
    <source>
    </source>
</evidence>
<evidence type="ECO:0000303" key="5">
    <source>
    </source>
</evidence>
<evidence type="ECO:0000305" key="6"/>
<evidence type="ECO:0000305" key="7">
    <source>
    </source>
</evidence>